<feature type="chain" id="PRO_0000369970" description="Serine hydroxymethyltransferase">
    <location>
        <begin position="1"/>
        <end position="422"/>
    </location>
</feature>
<feature type="binding site" evidence="1">
    <location>
        <begin position="121"/>
        <end position="123"/>
    </location>
    <ligand>
        <name>(6S)-5,6,7,8-tetrahydrofolate</name>
        <dbReference type="ChEBI" id="CHEBI:57453"/>
    </ligand>
</feature>
<feature type="binding site" evidence="1">
    <location>
        <position position="245"/>
    </location>
    <ligand>
        <name>(6S)-5,6,7,8-tetrahydrofolate</name>
        <dbReference type="ChEBI" id="CHEBI:57453"/>
    </ligand>
</feature>
<feature type="site" description="Plays an important role in substrate specificity" evidence="1">
    <location>
        <position position="226"/>
    </location>
</feature>
<feature type="modified residue" description="N6-(pyridoxal phosphate)lysine" evidence="1">
    <location>
        <position position="227"/>
    </location>
</feature>
<gene>
    <name evidence="1" type="primary">glyA</name>
    <name type="ordered locus">Msm_1337</name>
</gene>
<evidence type="ECO:0000255" key="1">
    <source>
        <dbReference type="HAMAP-Rule" id="MF_00051"/>
    </source>
</evidence>
<organism>
    <name type="scientific">Methanobrevibacter smithii (strain ATCC 35061 / DSM 861 / OCM 144 / PS)</name>
    <dbReference type="NCBI Taxonomy" id="420247"/>
    <lineage>
        <taxon>Archaea</taxon>
        <taxon>Methanobacteriati</taxon>
        <taxon>Methanobacteriota</taxon>
        <taxon>Methanomada group</taxon>
        <taxon>Methanobacteria</taxon>
        <taxon>Methanobacteriales</taxon>
        <taxon>Methanobacteriaceae</taxon>
        <taxon>Methanobrevibacter</taxon>
    </lineage>
</organism>
<protein>
    <recommendedName>
        <fullName evidence="1">Serine hydroxymethyltransferase</fullName>
        <shortName evidence="1">SHMT</shortName>
        <shortName evidence="1">Serine methylase</shortName>
        <ecNumber evidence="1">2.1.2.-</ecNumber>
    </recommendedName>
</protein>
<name>GLYA_METS3</name>
<keyword id="KW-0028">Amino-acid biosynthesis</keyword>
<keyword id="KW-0963">Cytoplasm</keyword>
<keyword id="KW-0554">One-carbon metabolism</keyword>
<keyword id="KW-0663">Pyridoxal phosphate</keyword>
<keyword id="KW-0808">Transferase</keyword>
<comment type="function">
    <text evidence="1">Catalyzes the reversible interconversion of serine and glycine with tetrahydromethanopterin (H4MPT) serving as the one-carbon carrier. Also exhibits a pteridine-independent aldolase activity toward beta-hydroxyamino acids, producing glycine and aldehydes, via a retro-aldol mechanism.</text>
</comment>
<comment type="catalytic activity">
    <reaction evidence="1">
        <text>5,10-methylenetetrahydromethanopterin + glycine + H2O = 5,6,7,8-tetrahydromethanopterin + L-serine</text>
        <dbReference type="Rhea" id="RHEA:47104"/>
        <dbReference type="ChEBI" id="CHEBI:15377"/>
        <dbReference type="ChEBI" id="CHEBI:33384"/>
        <dbReference type="ChEBI" id="CHEBI:57305"/>
        <dbReference type="ChEBI" id="CHEBI:57818"/>
        <dbReference type="ChEBI" id="CHEBI:58103"/>
    </reaction>
</comment>
<comment type="cofactor">
    <cofactor evidence="1">
        <name>pyridoxal 5'-phosphate</name>
        <dbReference type="ChEBI" id="CHEBI:597326"/>
    </cofactor>
</comment>
<comment type="pathway">
    <text evidence="1">Amino-acid biosynthesis; glycine biosynthesis; glycine from L-serine: step 1/1.</text>
</comment>
<comment type="subunit">
    <text evidence="1">Homodimer.</text>
</comment>
<comment type="subcellular location">
    <subcellularLocation>
        <location evidence="1">Cytoplasm</location>
    </subcellularLocation>
</comment>
<comment type="similarity">
    <text evidence="1">Belongs to the SHMT family.</text>
</comment>
<dbReference type="EC" id="2.1.2.-" evidence="1"/>
<dbReference type="EMBL" id="CP000678">
    <property type="protein sequence ID" value="ABQ87542.1"/>
    <property type="molecule type" value="Genomic_DNA"/>
</dbReference>
<dbReference type="RefSeq" id="WP_004036282.1">
    <property type="nucleotide sequence ID" value="NZ_CP117965.1"/>
</dbReference>
<dbReference type="SMR" id="A5UMW4"/>
<dbReference type="STRING" id="420247.Msm_1337"/>
<dbReference type="EnsemblBacteria" id="ABQ87542">
    <property type="protein sequence ID" value="ABQ87542"/>
    <property type="gene ID" value="Msm_1337"/>
</dbReference>
<dbReference type="GeneID" id="78817988"/>
<dbReference type="KEGG" id="msi:Msm_1337"/>
<dbReference type="PATRIC" id="fig|420247.28.peg.1332"/>
<dbReference type="eggNOG" id="arCOG00070">
    <property type="taxonomic scope" value="Archaea"/>
</dbReference>
<dbReference type="HOGENOM" id="CLU_022477_2_1_2"/>
<dbReference type="UniPathway" id="UPA00288">
    <property type="reaction ID" value="UER01023"/>
</dbReference>
<dbReference type="Proteomes" id="UP000001992">
    <property type="component" value="Chromosome"/>
</dbReference>
<dbReference type="GO" id="GO:0005737">
    <property type="term" value="C:cytoplasm"/>
    <property type="evidence" value="ECO:0007669"/>
    <property type="project" value="UniProtKB-SubCell"/>
</dbReference>
<dbReference type="GO" id="GO:0004372">
    <property type="term" value="F:glycine hydroxymethyltransferase activity"/>
    <property type="evidence" value="ECO:0007669"/>
    <property type="project" value="UniProtKB-UniRule"/>
</dbReference>
<dbReference type="GO" id="GO:0030170">
    <property type="term" value="F:pyridoxal phosphate binding"/>
    <property type="evidence" value="ECO:0007669"/>
    <property type="project" value="UniProtKB-UniRule"/>
</dbReference>
<dbReference type="GO" id="GO:0019264">
    <property type="term" value="P:glycine biosynthetic process from serine"/>
    <property type="evidence" value="ECO:0007669"/>
    <property type="project" value="UniProtKB-UniRule"/>
</dbReference>
<dbReference type="GO" id="GO:0035999">
    <property type="term" value="P:tetrahydrofolate interconversion"/>
    <property type="evidence" value="ECO:0007669"/>
    <property type="project" value="InterPro"/>
</dbReference>
<dbReference type="CDD" id="cd00378">
    <property type="entry name" value="SHMT"/>
    <property type="match status" value="1"/>
</dbReference>
<dbReference type="FunFam" id="3.40.640.10:FF:000101">
    <property type="entry name" value="Serine hydroxymethyltransferase"/>
    <property type="match status" value="1"/>
</dbReference>
<dbReference type="Gene3D" id="3.90.1150.10">
    <property type="entry name" value="Aspartate Aminotransferase, domain 1"/>
    <property type="match status" value="1"/>
</dbReference>
<dbReference type="Gene3D" id="3.40.640.10">
    <property type="entry name" value="Type I PLP-dependent aspartate aminotransferase-like (Major domain)"/>
    <property type="match status" value="1"/>
</dbReference>
<dbReference type="HAMAP" id="MF_00051">
    <property type="entry name" value="SHMT"/>
    <property type="match status" value="1"/>
</dbReference>
<dbReference type="InterPro" id="IPR015424">
    <property type="entry name" value="PyrdxlP-dep_Trfase"/>
</dbReference>
<dbReference type="InterPro" id="IPR015421">
    <property type="entry name" value="PyrdxlP-dep_Trfase_major"/>
</dbReference>
<dbReference type="InterPro" id="IPR015422">
    <property type="entry name" value="PyrdxlP-dep_Trfase_small"/>
</dbReference>
<dbReference type="InterPro" id="IPR001085">
    <property type="entry name" value="Ser_HO-MeTrfase"/>
</dbReference>
<dbReference type="InterPro" id="IPR049943">
    <property type="entry name" value="Ser_HO-MeTrfase-like"/>
</dbReference>
<dbReference type="InterPro" id="IPR019798">
    <property type="entry name" value="Ser_HO-MeTrfase_PLP_BS"/>
</dbReference>
<dbReference type="InterPro" id="IPR039429">
    <property type="entry name" value="SHMT-like_dom"/>
</dbReference>
<dbReference type="NCBIfam" id="NF000586">
    <property type="entry name" value="PRK00011.1"/>
    <property type="match status" value="1"/>
</dbReference>
<dbReference type="PANTHER" id="PTHR11680">
    <property type="entry name" value="SERINE HYDROXYMETHYLTRANSFERASE"/>
    <property type="match status" value="1"/>
</dbReference>
<dbReference type="PANTHER" id="PTHR11680:SF35">
    <property type="entry name" value="SERINE HYDROXYMETHYLTRANSFERASE 1"/>
    <property type="match status" value="1"/>
</dbReference>
<dbReference type="Pfam" id="PF00464">
    <property type="entry name" value="SHMT"/>
    <property type="match status" value="1"/>
</dbReference>
<dbReference type="PIRSF" id="PIRSF000412">
    <property type="entry name" value="SHMT"/>
    <property type="match status" value="1"/>
</dbReference>
<dbReference type="SUPFAM" id="SSF53383">
    <property type="entry name" value="PLP-dependent transferases"/>
    <property type="match status" value="1"/>
</dbReference>
<dbReference type="PROSITE" id="PS00096">
    <property type="entry name" value="SHMT"/>
    <property type="match status" value="1"/>
</dbReference>
<accession>A5UMW4</accession>
<proteinExistence type="inferred from homology"/>
<reference key="1">
    <citation type="journal article" date="2007" name="Proc. Natl. Acad. Sci. U.S.A.">
        <title>Genomic and metabolic adaptations of Methanobrevibacter smithii to the human gut.</title>
        <authorList>
            <person name="Samuel B.S."/>
            <person name="Hansen E.E."/>
            <person name="Manchester J.K."/>
            <person name="Coutinho P.M."/>
            <person name="Henrissat B."/>
            <person name="Fulton R."/>
            <person name="Latreille P."/>
            <person name="Kim K."/>
            <person name="Wilson R.K."/>
            <person name="Gordon J.I."/>
        </authorList>
    </citation>
    <scope>NUCLEOTIDE SEQUENCE [LARGE SCALE GENOMIC DNA]</scope>
    <source>
        <strain>ATCC 35061 / DSM 861 / OCM 144 / PS</strain>
    </source>
</reference>
<sequence>MTDYQNEVLEFERIMKEHTNYMRNSINLIASENITSSDVTEAVASDLAHRYAEGQSHERLYEGCQYIDEIEDRVIDLSKKLFNVDYANVQPISGVTANLAAFFGYSDYGDKLMALDVPYGGHISHAKVSAAGIAGLKTISHPFDKDIMNIDIDAMNKKILEEKPKIVLFGGSLFLFPHPVKEAREAADEVGAKIMYDAAHVLGLIAGGQFQQPIAEGADLMMGSTHKSFPGPQGGIILSHKENKEVIDNAVFPGVVSNHHLHHLAGLGIASAEMLEFGQDYAKQIVKNSKALAQSLYERGFDVLCEELGFTESHQLAINVSNIRSASDIAHDLANNDVILNKNLLPGDNVDDSDNPSGLRIGTQEITRRGLKEKEMDEVAEFIKRVAVDKENIKDEVREFMDQYTTVHYSFSQNEGYRFHKL</sequence>